<evidence type="ECO:0000250" key="1"/>
<evidence type="ECO:0000305" key="2"/>
<feature type="initiator methionine" description="Removed; by host" evidence="1">
    <location>
        <position position="1"/>
    </location>
</feature>
<feature type="chain" id="PRO_0000085240" description="Protein Nef">
    <location>
        <begin position="2"/>
        <end position="229"/>
    </location>
</feature>
<feature type="region of interest" description="Acidic">
    <location>
        <begin position="76"/>
        <end position="84"/>
    </location>
</feature>
<feature type="region of interest" description="Mediates dimerization" evidence="1">
    <location>
        <begin position="127"/>
        <end position="143"/>
    </location>
</feature>
<feature type="lipid moiety-binding region" description="N-myristoyl glycine; by host" evidence="1">
    <location>
        <position position="2"/>
    </location>
</feature>
<name>NEF_SIVVG</name>
<comment type="function">
    <text evidence="1">Seems to play a role in optimizing the host cell environment for viral replication without causing cell death by apoptosis. Enhances virus infectivity and pathogenicity. Probably involved in viral immune evasion mechanisms (By similarity).</text>
</comment>
<comment type="function">
    <text evidence="1">In infected CD4(+) T-lymphocytes, down-regulates cell surface expression of CD4, CD28, CD3, and MHC-I or MHC-II molecules.</text>
</comment>
<comment type="function">
    <text evidence="1">Interferes with TCR signaling from the cell membrane. Interacts with CD247/TCRZ (TCR zeta chain) and exert potent down-regulation of cell surface TCR/CD3 complexes (By similarity).</text>
</comment>
<comment type="subunit">
    <text evidence="1">Homodimer. Interacts with host CD247/TCRZ; this interaction induces down-regulation of cell surface TCR/CD3 complexes.</text>
</comment>
<comment type="subcellular location">
    <subcellularLocation>
        <location evidence="1">Host cell membrane</location>
        <topology evidence="1">Lipid-anchor</topology>
        <orientation evidence="1">Cytoplasmic side</orientation>
    </subcellularLocation>
    <text evidence="1">Associates with the inner plasma membrane through its N-terminal domain.</text>
</comment>
<comment type="domain">
    <text evidence="1">The N-terminal domain is composed of the N-myristoyl glycine and of a cluster of positively charged amino acids. It is required for inner plasma membrane targeting of Nef (By similarity).</text>
</comment>
<comment type="miscellaneous">
    <text>This is an African green monkey isolate.</text>
</comment>
<comment type="similarity">
    <text evidence="2">Belongs to the lentivirus primate group Nef protein family.</text>
</comment>
<organismHost>
    <name type="scientific">Cercopithecidae</name>
    <name type="common">Old World monkeys</name>
    <dbReference type="NCBI Taxonomy" id="9527"/>
</organismHost>
<gene>
    <name type="primary">nef</name>
</gene>
<organism>
    <name type="scientific">Simian immunodeficiency virus agm.vervet (isolate AGM3)</name>
    <name type="common">SIV-agm.ver</name>
    <name type="synonym">Simian immunodeficiency virus African green monkey vervet</name>
    <dbReference type="NCBI Taxonomy" id="11730"/>
    <lineage>
        <taxon>Viruses</taxon>
        <taxon>Riboviria</taxon>
        <taxon>Pararnavirae</taxon>
        <taxon>Artverviricota</taxon>
        <taxon>Revtraviricetes</taxon>
        <taxon>Ortervirales</taxon>
        <taxon>Retroviridae</taxon>
        <taxon>Orthoretrovirinae</taxon>
        <taxon>Lentivirus</taxon>
        <taxon>Simian immunodeficiency virus</taxon>
    </lineage>
</organism>
<sequence>MGLGNSKPQHKKQLSLWHALHKTRATRYGLLADPLIGQSSTLQEECDKALKESLIRKRNGKMTPEGRKLQEGDKWDEWSDEEDEVGFPVRPRVPLRQMTYKLAVDFSHFLKEKGGLDGIYYSDRRNQILNLYALNEWGIIDDWNAWSEGPGIRYPRCFGFCFKLVPVDLHEEAETCERHCLVHPAQVREDPDGINHGEVLVWKFDPMLAVQYDPNRKYLTDMHDLGKRK</sequence>
<protein>
    <recommendedName>
        <fullName>Protein Nef</fullName>
    </recommendedName>
    <alternativeName>
        <fullName>3'ORF</fullName>
    </alternativeName>
    <alternativeName>
        <fullName>Negative factor</fullName>
        <shortName>F-protein</shortName>
    </alternativeName>
</protein>
<proteinExistence type="inferred from homology"/>
<keyword id="KW-1032">Host cell membrane</keyword>
<keyword id="KW-1043">Host membrane</keyword>
<keyword id="KW-0945">Host-virus interaction</keyword>
<keyword id="KW-0449">Lipoprotein</keyword>
<keyword id="KW-0472">Membrane</keyword>
<keyword id="KW-0519">Myristate</keyword>
<keyword id="KW-0899">Viral immunoevasion</keyword>
<keyword id="KW-0843">Virulence</keyword>
<dbReference type="EMBL" id="M30931">
    <property type="protein sequence ID" value="AAA91920.1"/>
    <property type="molecule type" value="Genomic_RNA"/>
</dbReference>
<dbReference type="SMR" id="P27979"/>
<dbReference type="GO" id="GO:0020002">
    <property type="term" value="C:host cell plasma membrane"/>
    <property type="evidence" value="ECO:0007669"/>
    <property type="project" value="UniProtKB-SubCell"/>
</dbReference>
<dbReference type="GO" id="GO:0016020">
    <property type="term" value="C:membrane"/>
    <property type="evidence" value="ECO:0007669"/>
    <property type="project" value="UniProtKB-KW"/>
</dbReference>
<dbReference type="GO" id="GO:0005525">
    <property type="term" value="F:GTP binding"/>
    <property type="evidence" value="ECO:0007669"/>
    <property type="project" value="InterPro"/>
</dbReference>
<dbReference type="Gene3D" id="3.30.62.10">
    <property type="entry name" value="Nef Regulatory Factor"/>
    <property type="match status" value="1"/>
</dbReference>
<dbReference type="InterPro" id="IPR027481">
    <property type="entry name" value="HIV-1_Nef_core_sf"/>
</dbReference>
<dbReference type="InterPro" id="IPR001558">
    <property type="entry name" value="HIV_Nef"/>
</dbReference>
<dbReference type="Pfam" id="PF00469">
    <property type="entry name" value="F-protein"/>
    <property type="match status" value="1"/>
</dbReference>
<dbReference type="SUPFAM" id="SSF55671">
    <property type="entry name" value="Regulatory factor Nef"/>
    <property type="match status" value="1"/>
</dbReference>
<accession>P27979</accession>
<reference key="1">
    <citation type="journal article" date="1990" name="Virology">
        <title>Complete nucleotide sequence of a simian immunodeficiency virus from African green monkeys: a novel type of intragroup divergence.</title>
        <authorList>
            <person name="Baier M."/>
            <person name="Garber C."/>
            <person name="Mueller C."/>
            <person name="Cichutek K."/>
            <person name="Kurth R."/>
        </authorList>
    </citation>
    <scope>NUCLEOTIDE SEQUENCE [GENOMIC RNA]</scope>
</reference>